<evidence type="ECO:0000250" key="1"/>
<evidence type="ECO:0000255" key="2"/>
<evidence type="ECO:0000255" key="3">
    <source>
        <dbReference type="PROSITE-ProRule" id="PRU00703"/>
    </source>
</evidence>
<evidence type="ECO:0000255" key="4">
    <source>
        <dbReference type="PROSITE-ProRule" id="PRU00797"/>
    </source>
</evidence>
<evidence type="ECO:0000305" key="5"/>
<proteinExistence type="inferred from homology"/>
<keyword id="KW-0067">ATP-binding</keyword>
<keyword id="KW-0129">CBS domain</keyword>
<keyword id="KW-0413">Isomerase</keyword>
<keyword id="KW-0448">Lipopolysaccharide biosynthesis</keyword>
<keyword id="KW-0479">Metal-binding</keyword>
<keyword id="KW-0547">Nucleotide-binding</keyword>
<keyword id="KW-1185">Reference proteome</keyword>
<keyword id="KW-0677">Repeat</keyword>
<keyword id="KW-0862">Zinc</keyword>
<sequence length="321" mass="34135">MSDALLNAGRQTLMLELQEASRLPERLGDDFVRAANIIIHCEGKVIVSGIGKSGHIGKKIAATLASTGTPAFFVHPAEALHGDLGMIESRDVMLFISYSGGAKELDLIIPRLEDKSVALLAMTGKLHSPLGRAAKAVLDISVEREACPMHLAPTSSTVNTLMMGDALAMAVMQARGFNEEDFARSHPAGALGARLLNNVHHLMRQGDAIPQVMLATSVMDAMLELSRTGLGLVAVCDEQHVVKGVFTDGDLRRWLVGGGALTTPVSEAMTPNGITLQAQSRAIDAKELLMKRKITAAPVVDENGKLTGAINLQDFYQAGII</sequence>
<organism>
    <name type="scientific">Salmonella typhimurium (strain LT2 / SGSC1412 / ATCC 700720)</name>
    <dbReference type="NCBI Taxonomy" id="99287"/>
    <lineage>
        <taxon>Bacteria</taxon>
        <taxon>Pseudomonadati</taxon>
        <taxon>Pseudomonadota</taxon>
        <taxon>Gammaproteobacteria</taxon>
        <taxon>Enterobacterales</taxon>
        <taxon>Enterobacteriaceae</taxon>
        <taxon>Salmonella</taxon>
    </lineage>
</organism>
<feature type="chain" id="PRO_0000410940" description="Arabinose 5-phosphate isomerase GutQ">
    <location>
        <begin position="1"/>
        <end position="321"/>
    </location>
</feature>
<feature type="domain" description="SIS" evidence="4">
    <location>
        <begin position="34"/>
        <end position="177"/>
    </location>
</feature>
<feature type="domain" description="CBS 1" evidence="3">
    <location>
        <begin position="203"/>
        <end position="261"/>
    </location>
</feature>
<feature type="domain" description="CBS 2" evidence="3">
    <location>
        <begin position="269"/>
        <end position="321"/>
    </location>
</feature>
<feature type="binding site" evidence="2">
    <location>
        <begin position="49"/>
        <end position="54"/>
    </location>
    <ligand>
        <name>ATP</name>
        <dbReference type="ChEBI" id="CHEBI:30616"/>
    </ligand>
</feature>
<feature type="binding site" evidence="1">
    <location>
        <begin position="68"/>
        <end position="69"/>
    </location>
    <ligand>
        <name>substrate</name>
    </ligand>
</feature>
<feature type="binding site" evidence="1">
    <location>
        <position position="75"/>
    </location>
    <ligand>
        <name>substrate</name>
    </ligand>
</feature>
<feature type="binding site" evidence="1">
    <location>
        <position position="75"/>
    </location>
    <ligand>
        <name>Zn(2+)</name>
        <dbReference type="ChEBI" id="CHEBI:29105"/>
    </ligand>
</feature>
<feature type="binding site" evidence="1">
    <location>
        <position position="81"/>
    </location>
    <ligand>
        <name>substrate</name>
    </ligand>
</feature>
<feature type="binding site" evidence="1">
    <location>
        <begin position="107"/>
        <end position="116"/>
    </location>
    <ligand>
        <name>substrate</name>
    </ligand>
</feature>
<feature type="binding site" evidence="1">
    <location>
        <begin position="141"/>
        <end position="143"/>
    </location>
    <ligand>
        <name>substrate</name>
    </ligand>
</feature>
<feature type="binding site" evidence="1">
    <location>
        <position position="267"/>
    </location>
    <ligand>
        <name>substrate</name>
    </ligand>
</feature>
<feature type="site" description="Catalytically relevant" evidence="1">
    <location>
        <position position="52"/>
    </location>
</feature>
<feature type="site" description="Catalytically relevant" evidence="1">
    <location>
        <position position="104"/>
    </location>
</feature>
<feature type="site" description="Catalytically relevant" evidence="1">
    <location>
        <position position="145"/>
    </location>
</feature>
<feature type="site" description="Catalytically relevant" evidence="1">
    <location>
        <position position="186"/>
    </location>
</feature>
<comment type="function">
    <text evidence="1">Catalyzes the reversible aldol-ketol isomerization between D-ribulose 5-phosphate (Ru5P) and D-arabinose 5-phosphate (A5P). It is also able of sustaining the biosynthetic pathway of 3-deoxy-D-manno-octulosonate (KDO), a unique 8-carbon sugar component of lipopolysaccharides (LPSs) (By similarity).</text>
</comment>
<comment type="catalytic activity">
    <reaction>
        <text>D-arabinose 5-phosphate = D-ribulose 5-phosphate</text>
        <dbReference type="Rhea" id="RHEA:23104"/>
        <dbReference type="ChEBI" id="CHEBI:57693"/>
        <dbReference type="ChEBI" id="CHEBI:58121"/>
        <dbReference type="EC" id="5.3.1.13"/>
    </reaction>
</comment>
<comment type="subunit">
    <text evidence="1">Homotetramer.</text>
</comment>
<comment type="similarity">
    <text evidence="5">Belongs to the SIS family. GutQ/KpsF subfamily.</text>
</comment>
<comment type="sequence caution" evidence="5">
    <conflict type="erroneous initiation">
        <sequence resource="EMBL-CDS" id="AAL21718"/>
    </conflict>
    <text>Truncated N-terminus.</text>
</comment>
<name>GUTQ_SALTY</name>
<protein>
    <recommendedName>
        <fullName>Arabinose 5-phosphate isomerase GutQ</fullName>
        <shortName>API</shortName>
        <shortName>G-API</shortName>
        <ecNumber>5.3.1.13</ecNumber>
    </recommendedName>
    <alternativeName>
        <fullName>Phosphosugar aldol-ketol isomerase</fullName>
    </alternativeName>
</protein>
<gene>
    <name type="primary">gutQ</name>
    <name type="ordered locus">STM2838</name>
</gene>
<accession>Q8ZMJ9</accession>
<reference key="1">
    <citation type="journal article" date="2001" name="Nature">
        <title>Complete genome sequence of Salmonella enterica serovar Typhimurium LT2.</title>
        <authorList>
            <person name="McClelland M."/>
            <person name="Sanderson K.E."/>
            <person name="Spieth J."/>
            <person name="Clifton S.W."/>
            <person name="Latreille P."/>
            <person name="Courtney L."/>
            <person name="Porwollik S."/>
            <person name="Ali J."/>
            <person name="Dante M."/>
            <person name="Du F."/>
            <person name="Hou S."/>
            <person name="Layman D."/>
            <person name="Leonard S."/>
            <person name="Nguyen C."/>
            <person name="Scott K."/>
            <person name="Holmes A."/>
            <person name="Grewal N."/>
            <person name="Mulvaney E."/>
            <person name="Ryan E."/>
            <person name="Sun H."/>
            <person name="Florea L."/>
            <person name="Miller W."/>
            <person name="Stoneking T."/>
            <person name="Nhan M."/>
            <person name="Waterston R."/>
            <person name="Wilson R.K."/>
        </authorList>
    </citation>
    <scope>NUCLEOTIDE SEQUENCE [LARGE SCALE GENOMIC DNA]</scope>
    <source>
        <strain>LT2 / SGSC1412 / ATCC 700720</strain>
    </source>
</reference>
<dbReference type="EC" id="5.3.1.13"/>
<dbReference type="EMBL" id="AE006468">
    <property type="protein sequence ID" value="AAL21718.1"/>
    <property type="status" value="ALT_INIT"/>
    <property type="molecule type" value="Genomic_DNA"/>
</dbReference>
<dbReference type="RefSeq" id="NP_461759.3">
    <property type="nucleotide sequence ID" value="NC_003197.2"/>
</dbReference>
<dbReference type="RefSeq" id="WP_001582113.1">
    <property type="nucleotide sequence ID" value="NC_003197.2"/>
</dbReference>
<dbReference type="SMR" id="Q8ZMJ9"/>
<dbReference type="STRING" id="99287.STM2838"/>
<dbReference type="PaxDb" id="99287-STM2838"/>
<dbReference type="DNASU" id="1254361"/>
<dbReference type="GeneID" id="1254361"/>
<dbReference type="KEGG" id="stm:STM2838"/>
<dbReference type="PATRIC" id="fig|99287.12.peg.2992"/>
<dbReference type="HOGENOM" id="CLU_040681_13_1_6"/>
<dbReference type="PhylomeDB" id="Q8ZMJ9"/>
<dbReference type="Proteomes" id="UP000001014">
    <property type="component" value="Chromosome"/>
</dbReference>
<dbReference type="GO" id="GO:0019146">
    <property type="term" value="F:arabinose-5-phosphate isomerase activity"/>
    <property type="evidence" value="ECO:0007669"/>
    <property type="project" value="UniProtKB-EC"/>
</dbReference>
<dbReference type="GO" id="GO:0005524">
    <property type="term" value="F:ATP binding"/>
    <property type="evidence" value="ECO:0007669"/>
    <property type="project" value="UniProtKB-KW"/>
</dbReference>
<dbReference type="GO" id="GO:0046872">
    <property type="term" value="F:metal ion binding"/>
    <property type="evidence" value="ECO:0007669"/>
    <property type="project" value="UniProtKB-KW"/>
</dbReference>
<dbReference type="GO" id="GO:0019294">
    <property type="term" value="P:keto-3-deoxy-D-manno-octulosonic acid biosynthetic process"/>
    <property type="evidence" value="ECO:0000250"/>
    <property type="project" value="UniProtKB"/>
</dbReference>
<dbReference type="CDD" id="cd04604">
    <property type="entry name" value="CBS_pair_SIS_assoc"/>
    <property type="match status" value="1"/>
</dbReference>
<dbReference type="CDD" id="cd05014">
    <property type="entry name" value="SIS_Kpsf"/>
    <property type="match status" value="1"/>
</dbReference>
<dbReference type="FunFam" id="3.10.580.10:FF:000013">
    <property type="entry name" value="Arabinose 5-phosphate isomerase"/>
    <property type="match status" value="1"/>
</dbReference>
<dbReference type="FunFam" id="3.40.50.10490:FF:000011">
    <property type="entry name" value="Arabinose 5-phosphate isomerase"/>
    <property type="match status" value="1"/>
</dbReference>
<dbReference type="Gene3D" id="3.10.580.10">
    <property type="entry name" value="CBS-domain"/>
    <property type="match status" value="1"/>
</dbReference>
<dbReference type="Gene3D" id="3.40.50.10490">
    <property type="entry name" value="Glucose-6-phosphate isomerase like protein, domain 1"/>
    <property type="match status" value="1"/>
</dbReference>
<dbReference type="InterPro" id="IPR000644">
    <property type="entry name" value="CBS_dom"/>
</dbReference>
<dbReference type="InterPro" id="IPR046342">
    <property type="entry name" value="CBS_dom_sf"/>
</dbReference>
<dbReference type="InterPro" id="IPR050986">
    <property type="entry name" value="GutQ/KpsF_isomerases"/>
</dbReference>
<dbReference type="InterPro" id="IPR004800">
    <property type="entry name" value="KdsD/KpsF-type"/>
</dbReference>
<dbReference type="InterPro" id="IPR001347">
    <property type="entry name" value="SIS_dom"/>
</dbReference>
<dbReference type="InterPro" id="IPR046348">
    <property type="entry name" value="SIS_dom_sf"/>
</dbReference>
<dbReference type="InterPro" id="IPR035474">
    <property type="entry name" value="SIS_Kpsf"/>
</dbReference>
<dbReference type="NCBIfam" id="TIGR00393">
    <property type="entry name" value="kpsF"/>
    <property type="match status" value="1"/>
</dbReference>
<dbReference type="NCBIfam" id="NF008581">
    <property type="entry name" value="PRK11543.1"/>
    <property type="match status" value="1"/>
</dbReference>
<dbReference type="PANTHER" id="PTHR42745">
    <property type="match status" value="1"/>
</dbReference>
<dbReference type="PANTHER" id="PTHR42745:SF2">
    <property type="entry name" value="ARABINOSE 5-PHOSPHATE ISOMERASE GUTQ"/>
    <property type="match status" value="1"/>
</dbReference>
<dbReference type="Pfam" id="PF00571">
    <property type="entry name" value="CBS"/>
    <property type="match status" value="2"/>
</dbReference>
<dbReference type="Pfam" id="PF01380">
    <property type="entry name" value="SIS"/>
    <property type="match status" value="1"/>
</dbReference>
<dbReference type="PIRSF" id="PIRSF004692">
    <property type="entry name" value="KdsD_KpsF"/>
    <property type="match status" value="1"/>
</dbReference>
<dbReference type="SUPFAM" id="SSF54631">
    <property type="entry name" value="CBS-domain pair"/>
    <property type="match status" value="1"/>
</dbReference>
<dbReference type="SUPFAM" id="SSF53697">
    <property type="entry name" value="SIS domain"/>
    <property type="match status" value="1"/>
</dbReference>
<dbReference type="PROSITE" id="PS51371">
    <property type="entry name" value="CBS"/>
    <property type="match status" value="2"/>
</dbReference>
<dbReference type="PROSITE" id="PS51464">
    <property type="entry name" value="SIS"/>
    <property type="match status" value="1"/>
</dbReference>